<gene>
    <name evidence="1" type="primary">rpsN</name>
    <name type="ordered locus">ETA_31500</name>
</gene>
<accession>B2VK51</accession>
<sequence length="101" mass="11566">MAKQSMKAREVVRVKLADKYRAKREELKAIISSVNSSDEDRWNAVLKLQSLPRDSSPSRQRKRCRQTGRPHGYVGKFGLSRIKLREAAMRGEVPGLKKASW</sequence>
<organism>
    <name type="scientific">Erwinia tasmaniensis (strain DSM 17950 / CFBP 7177 / CIP 109463 / NCPPB 4357 / Et1/99)</name>
    <dbReference type="NCBI Taxonomy" id="465817"/>
    <lineage>
        <taxon>Bacteria</taxon>
        <taxon>Pseudomonadati</taxon>
        <taxon>Pseudomonadota</taxon>
        <taxon>Gammaproteobacteria</taxon>
        <taxon>Enterobacterales</taxon>
        <taxon>Erwiniaceae</taxon>
        <taxon>Erwinia</taxon>
    </lineage>
</organism>
<evidence type="ECO:0000255" key="1">
    <source>
        <dbReference type="HAMAP-Rule" id="MF_00537"/>
    </source>
</evidence>
<evidence type="ECO:0000256" key="2">
    <source>
        <dbReference type="SAM" id="MobiDB-lite"/>
    </source>
</evidence>
<evidence type="ECO:0000305" key="3"/>
<name>RS14_ERWT9</name>
<keyword id="KW-1185">Reference proteome</keyword>
<keyword id="KW-0687">Ribonucleoprotein</keyword>
<keyword id="KW-0689">Ribosomal protein</keyword>
<keyword id="KW-0694">RNA-binding</keyword>
<keyword id="KW-0699">rRNA-binding</keyword>
<feature type="chain" id="PRO_1000128400" description="Small ribosomal subunit protein uS14">
    <location>
        <begin position="1"/>
        <end position="101"/>
    </location>
</feature>
<feature type="region of interest" description="Disordered" evidence="2">
    <location>
        <begin position="50"/>
        <end position="70"/>
    </location>
</feature>
<feature type="compositionally biased region" description="Basic residues" evidence="2">
    <location>
        <begin position="59"/>
        <end position="68"/>
    </location>
</feature>
<protein>
    <recommendedName>
        <fullName evidence="1">Small ribosomal subunit protein uS14</fullName>
    </recommendedName>
    <alternativeName>
        <fullName evidence="3">30S ribosomal protein S14</fullName>
    </alternativeName>
</protein>
<proteinExistence type="inferred from homology"/>
<comment type="function">
    <text evidence="1">Binds 16S rRNA, required for the assembly of 30S particles and may also be responsible for determining the conformation of the 16S rRNA at the A site.</text>
</comment>
<comment type="subunit">
    <text evidence="1">Part of the 30S ribosomal subunit. Contacts proteins S3 and S10.</text>
</comment>
<comment type="similarity">
    <text evidence="1">Belongs to the universal ribosomal protein uS14 family.</text>
</comment>
<reference key="1">
    <citation type="journal article" date="2008" name="Environ. Microbiol.">
        <title>The genome of Erwinia tasmaniensis strain Et1/99, a non-pathogenic bacterium in the genus Erwinia.</title>
        <authorList>
            <person name="Kube M."/>
            <person name="Migdoll A.M."/>
            <person name="Mueller I."/>
            <person name="Kuhl H."/>
            <person name="Beck A."/>
            <person name="Reinhardt R."/>
            <person name="Geider K."/>
        </authorList>
    </citation>
    <scope>NUCLEOTIDE SEQUENCE [LARGE SCALE GENOMIC DNA]</scope>
    <source>
        <strain>DSM 17950 / CFBP 7177 / CIP 109463 / NCPPB 4357 / Et1/99</strain>
    </source>
</reference>
<dbReference type="EMBL" id="CU468135">
    <property type="protein sequence ID" value="CAO98196.1"/>
    <property type="molecule type" value="Genomic_DNA"/>
</dbReference>
<dbReference type="RefSeq" id="WP_012442839.1">
    <property type="nucleotide sequence ID" value="NC_010694.1"/>
</dbReference>
<dbReference type="SMR" id="B2VK51"/>
<dbReference type="STRING" id="465817.ETA_31500"/>
<dbReference type="KEGG" id="eta:ETA_31500"/>
<dbReference type="eggNOG" id="COG0199">
    <property type="taxonomic scope" value="Bacteria"/>
</dbReference>
<dbReference type="HOGENOM" id="CLU_139869_0_1_6"/>
<dbReference type="OrthoDB" id="9810484at2"/>
<dbReference type="Proteomes" id="UP000001726">
    <property type="component" value="Chromosome"/>
</dbReference>
<dbReference type="GO" id="GO:0005737">
    <property type="term" value="C:cytoplasm"/>
    <property type="evidence" value="ECO:0007669"/>
    <property type="project" value="UniProtKB-ARBA"/>
</dbReference>
<dbReference type="GO" id="GO:0015935">
    <property type="term" value="C:small ribosomal subunit"/>
    <property type="evidence" value="ECO:0007669"/>
    <property type="project" value="TreeGrafter"/>
</dbReference>
<dbReference type="GO" id="GO:0019843">
    <property type="term" value="F:rRNA binding"/>
    <property type="evidence" value="ECO:0007669"/>
    <property type="project" value="UniProtKB-UniRule"/>
</dbReference>
<dbReference type="GO" id="GO:0003735">
    <property type="term" value="F:structural constituent of ribosome"/>
    <property type="evidence" value="ECO:0007669"/>
    <property type="project" value="InterPro"/>
</dbReference>
<dbReference type="GO" id="GO:0006412">
    <property type="term" value="P:translation"/>
    <property type="evidence" value="ECO:0007669"/>
    <property type="project" value="UniProtKB-UniRule"/>
</dbReference>
<dbReference type="FunFam" id="1.10.287.1480:FF:000001">
    <property type="entry name" value="30S ribosomal protein S14"/>
    <property type="match status" value="1"/>
</dbReference>
<dbReference type="Gene3D" id="1.10.287.1480">
    <property type="match status" value="1"/>
</dbReference>
<dbReference type="HAMAP" id="MF_00537">
    <property type="entry name" value="Ribosomal_uS14_1"/>
    <property type="match status" value="1"/>
</dbReference>
<dbReference type="InterPro" id="IPR001209">
    <property type="entry name" value="Ribosomal_uS14"/>
</dbReference>
<dbReference type="InterPro" id="IPR023036">
    <property type="entry name" value="Ribosomal_uS14_bac/plastid"/>
</dbReference>
<dbReference type="InterPro" id="IPR018271">
    <property type="entry name" value="Ribosomal_uS14_CS"/>
</dbReference>
<dbReference type="NCBIfam" id="NF006477">
    <property type="entry name" value="PRK08881.1"/>
    <property type="match status" value="1"/>
</dbReference>
<dbReference type="PANTHER" id="PTHR19836">
    <property type="entry name" value="30S RIBOSOMAL PROTEIN S14"/>
    <property type="match status" value="1"/>
</dbReference>
<dbReference type="PANTHER" id="PTHR19836:SF19">
    <property type="entry name" value="SMALL RIBOSOMAL SUBUNIT PROTEIN US14M"/>
    <property type="match status" value="1"/>
</dbReference>
<dbReference type="Pfam" id="PF00253">
    <property type="entry name" value="Ribosomal_S14"/>
    <property type="match status" value="1"/>
</dbReference>
<dbReference type="SUPFAM" id="SSF57716">
    <property type="entry name" value="Glucocorticoid receptor-like (DNA-binding domain)"/>
    <property type="match status" value="1"/>
</dbReference>
<dbReference type="PROSITE" id="PS00527">
    <property type="entry name" value="RIBOSOMAL_S14"/>
    <property type="match status" value="1"/>
</dbReference>